<proteinExistence type="evidence at transcript level"/>
<reference key="1">
    <citation type="journal article" date="1996" name="Endocrinology">
        <title>Short photoperiod-dependent down-regulation of thyrotropin-alpha and -beta in hamster pars tuberalis-specific cells is prevented by pinealectomy.</title>
        <authorList>
            <person name="Bockmann J."/>
            <person name="Boeckers T.M."/>
            <person name="Vennemann B."/>
            <person name="Niklowitz P."/>
            <person name="Mueller J."/>
            <person name="Wittkowski W."/>
            <person name="Sabel B."/>
            <person name="Kreutz M.R."/>
        </authorList>
    </citation>
    <scope>NUCLEOTIDE SEQUENCE [MRNA]</scope>
    <source>
        <tissue>Pituitary</tissue>
    </source>
</reference>
<sequence>YCLTINTTICAGYCMTRDINGKLFLPKSALSQDVCTYRDFTYRTVEIPGCPHHVAPYFSYPVAMSCKCGKCNTDYSDCIHEAVKTNYCTKPQTFYLGGFSV</sequence>
<name>TSHB_PHOSU</name>
<organism>
    <name type="scientific">Phodopus sungorus</name>
    <name type="common">Striped hairy-footed hamster</name>
    <name type="synonym">Djungarian hamster</name>
    <dbReference type="NCBI Taxonomy" id="10044"/>
    <lineage>
        <taxon>Eukaryota</taxon>
        <taxon>Metazoa</taxon>
        <taxon>Chordata</taxon>
        <taxon>Craniata</taxon>
        <taxon>Vertebrata</taxon>
        <taxon>Euteleostomi</taxon>
        <taxon>Mammalia</taxon>
        <taxon>Eutheria</taxon>
        <taxon>Euarchontoglires</taxon>
        <taxon>Glires</taxon>
        <taxon>Rodentia</taxon>
        <taxon>Myomorpha</taxon>
        <taxon>Muroidea</taxon>
        <taxon>Cricetidae</taxon>
        <taxon>Cricetinae</taxon>
        <taxon>Phodopus</taxon>
    </lineage>
</organism>
<evidence type="ECO:0000250" key="1"/>
<evidence type="ECO:0000255" key="2"/>
<evidence type="ECO:0000305" key="3"/>
<comment type="function">
    <text>Indispensable for the control of thyroid structure and metabolism.</text>
</comment>
<comment type="subunit">
    <text>Heterodimer of a common alpha chain and a unique beta chain which confers biological specificity to thyrotropin, lutropin, follitropin and gonadotropin.</text>
</comment>
<comment type="subcellular location">
    <subcellularLocation>
        <location>Secreted</location>
    </subcellularLocation>
</comment>
<comment type="similarity">
    <text evidence="3">Belongs to the glycoprotein hormones subunit beta family.</text>
</comment>
<dbReference type="EMBL" id="X90777">
    <property type="protein sequence ID" value="CAA62298.1"/>
    <property type="molecule type" value="mRNA"/>
</dbReference>
<dbReference type="SMR" id="Q62590"/>
<dbReference type="GlyCosmos" id="Q62590">
    <property type="glycosylation" value="1 site, No reported glycans"/>
</dbReference>
<dbReference type="GO" id="GO:0005737">
    <property type="term" value="C:cytoplasm"/>
    <property type="evidence" value="ECO:0007669"/>
    <property type="project" value="TreeGrafter"/>
</dbReference>
<dbReference type="GO" id="GO:0005615">
    <property type="term" value="C:extracellular space"/>
    <property type="evidence" value="ECO:0007669"/>
    <property type="project" value="TreeGrafter"/>
</dbReference>
<dbReference type="GO" id="GO:0005179">
    <property type="term" value="F:hormone activity"/>
    <property type="evidence" value="ECO:0007669"/>
    <property type="project" value="UniProtKB-KW"/>
</dbReference>
<dbReference type="GO" id="GO:0007186">
    <property type="term" value="P:G protein-coupled receptor signaling pathway"/>
    <property type="evidence" value="ECO:0007669"/>
    <property type="project" value="TreeGrafter"/>
</dbReference>
<dbReference type="CDD" id="cd00069">
    <property type="entry name" value="GHB_like"/>
    <property type="match status" value="1"/>
</dbReference>
<dbReference type="FunFam" id="2.10.90.10:FF:000007">
    <property type="entry name" value="Luteinizing hormone beta subunit"/>
    <property type="match status" value="1"/>
</dbReference>
<dbReference type="Gene3D" id="2.10.90.10">
    <property type="entry name" value="Cystine-knot cytokines"/>
    <property type="match status" value="1"/>
</dbReference>
<dbReference type="InterPro" id="IPR029034">
    <property type="entry name" value="Cystine-knot_cytokine"/>
</dbReference>
<dbReference type="InterPro" id="IPR006208">
    <property type="entry name" value="Glyco_hormone_CN"/>
</dbReference>
<dbReference type="InterPro" id="IPR001545">
    <property type="entry name" value="Gonadotropin_bsu"/>
</dbReference>
<dbReference type="InterPro" id="IPR018245">
    <property type="entry name" value="Gonadotropin_bsu_CS"/>
</dbReference>
<dbReference type="PANTHER" id="PTHR11515">
    <property type="entry name" value="GLYCOPROTEIN HORMONE BETA CHAIN"/>
    <property type="match status" value="1"/>
</dbReference>
<dbReference type="PANTHER" id="PTHR11515:SF5">
    <property type="entry name" value="THYROTROPIN SUBUNIT BETA"/>
    <property type="match status" value="1"/>
</dbReference>
<dbReference type="Pfam" id="PF00007">
    <property type="entry name" value="Cys_knot"/>
    <property type="match status" value="1"/>
</dbReference>
<dbReference type="SMART" id="SM00068">
    <property type="entry name" value="GHB"/>
    <property type="match status" value="1"/>
</dbReference>
<dbReference type="SUPFAM" id="SSF57501">
    <property type="entry name" value="Cystine-knot cytokines"/>
    <property type="match status" value="1"/>
</dbReference>
<dbReference type="PROSITE" id="PS00261">
    <property type="entry name" value="GLYCO_HORMONE_BETA_1"/>
    <property type="match status" value="1"/>
</dbReference>
<dbReference type="PROSITE" id="PS00689">
    <property type="entry name" value="GLYCO_HORMONE_BETA_2"/>
    <property type="match status" value="1"/>
</dbReference>
<protein>
    <recommendedName>
        <fullName>Thyrotropin subunit beta</fullName>
    </recommendedName>
    <alternativeName>
        <fullName>Thyroid-stimulating hormone subunit beta</fullName>
        <shortName>TSH-B</shortName>
        <shortName>TSH-beta</shortName>
    </alternativeName>
    <alternativeName>
        <fullName>Thyrotropin beta chain</fullName>
    </alternativeName>
</protein>
<accession>Q62590</accession>
<gene>
    <name type="primary">TSHB</name>
</gene>
<keyword id="KW-1015">Disulfide bond</keyword>
<keyword id="KW-0325">Glycoprotein</keyword>
<keyword id="KW-0372">Hormone</keyword>
<keyword id="KW-0964">Secreted</keyword>
<feature type="chain" id="PRO_0000149044" description="Thyrotropin subunit beta">
    <location>
        <begin position="1" status="less than"/>
        <end position="101"/>
    </location>
</feature>
<feature type="glycosylation site" description="N-linked (GlcNAc...) asparagine" evidence="2">
    <location>
        <position position="6"/>
    </location>
</feature>
<feature type="disulfide bond" evidence="1">
    <location>
        <begin position="2"/>
        <end position="88"/>
    </location>
</feature>
<feature type="disulfide bond" evidence="1">
    <location>
        <begin position="10"/>
        <end position="66"/>
    </location>
</feature>
<feature type="disulfide bond" evidence="1">
    <location>
        <begin position="14"/>
        <end position="68"/>
    </location>
</feature>
<feature type="disulfide bond" evidence="1">
    <location>
        <begin position="71"/>
        <end position="78"/>
    </location>
</feature>
<feature type="non-terminal residue">
    <location>
        <position position="1"/>
    </location>
</feature>